<evidence type="ECO:0000255" key="1">
    <source>
        <dbReference type="HAMAP-Rule" id="MF_00146"/>
    </source>
</evidence>
<comment type="function">
    <text evidence="1">Catalyzes the deamination of dCTP to dUTP.</text>
</comment>
<comment type="catalytic activity">
    <reaction evidence="1">
        <text>dCTP + H2O + H(+) = dUTP + NH4(+)</text>
        <dbReference type="Rhea" id="RHEA:22680"/>
        <dbReference type="ChEBI" id="CHEBI:15377"/>
        <dbReference type="ChEBI" id="CHEBI:15378"/>
        <dbReference type="ChEBI" id="CHEBI:28938"/>
        <dbReference type="ChEBI" id="CHEBI:61481"/>
        <dbReference type="ChEBI" id="CHEBI:61555"/>
        <dbReference type="EC" id="3.5.4.13"/>
    </reaction>
</comment>
<comment type="pathway">
    <text evidence="1">Pyrimidine metabolism; dUMP biosynthesis; dUMP from dCTP (dUTP route): step 1/2.</text>
</comment>
<comment type="subunit">
    <text evidence="1">Homotrimer.</text>
</comment>
<comment type="similarity">
    <text evidence="1">Belongs to the dCTP deaminase family.</text>
</comment>
<name>DCD_XANE5</name>
<accession>Q3BRJ0</accession>
<dbReference type="EC" id="3.5.4.13" evidence="1"/>
<dbReference type="EMBL" id="AM039952">
    <property type="protein sequence ID" value="CAJ24571.1"/>
    <property type="molecule type" value="Genomic_DNA"/>
</dbReference>
<dbReference type="RefSeq" id="WP_008577495.1">
    <property type="nucleotide sequence ID" value="NZ_CP017190.1"/>
</dbReference>
<dbReference type="SMR" id="Q3BRJ0"/>
<dbReference type="STRING" id="456327.BJD11_08390"/>
<dbReference type="GeneID" id="97511028"/>
<dbReference type="KEGG" id="xcv:XCV2892"/>
<dbReference type="eggNOG" id="COG0717">
    <property type="taxonomic scope" value="Bacteria"/>
</dbReference>
<dbReference type="HOGENOM" id="CLU_087476_4_0_6"/>
<dbReference type="UniPathway" id="UPA00610">
    <property type="reaction ID" value="UER00665"/>
</dbReference>
<dbReference type="Proteomes" id="UP000007069">
    <property type="component" value="Chromosome"/>
</dbReference>
<dbReference type="GO" id="GO:0008829">
    <property type="term" value="F:dCTP deaminase activity"/>
    <property type="evidence" value="ECO:0007669"/>
    <property type="project" value="UniProtKB-UniRule"/>
</dbReference>
<dbReference type="GO" id="GO:0000166">
    <property type="term" value="F:nucleotide binding"/>
    <property type="evidence" value="ECO:0007669"/>
    <property type="project" value="UniProtKB-KW"/>
</dbReference>
<dbReference type="GO" id="GO:0006226">
    <property type="term" value="P:dUMP biosynthetic process"/>
    <property type="evidence" value="ECO:0007669"/>
    <property type="project" value="UniProtKB-UniPathway"/>
</dbReference>
<dbReference type="GO" id="GO:0006229">
    <property type="term" value="P:dUTP biosynthetic process"/>
    <property type="evidence" value="ECO:0007669"/>
    <property type="project" value="UniProtKB-UniRule"/>
</dbReference>
<dbReference type="GO" id="GO:0015949">
    <property type="term" value="P:nucleobase-containing small molecule interconversion"/>
    <property type="evidence" value="ECO:0007669"/>
    <property type="project" value="TreeGrafter"/>
</dbReference>
<dbReference type="CDD" id="cd07557">
    <property type="entry name" value="trimeric_dUTPase"/>
    <property type="match status" value="1"/>
</dbReference>
<dbReference type="FunFam" id="2.70.40.10:FF:000001">
    <property type="entry name" value="dCTP deaminase"/>
    <property type="match status" value="1"/>
</dbReference>
<dbReference type="Gene3D" id="2.70.40.10">
    <property type="match status" value="1"/>
</dbReference>
<dbReference type="HAMAP" id="MF_00146">
    <property type="entry name" value="dCTP_deaminase"/>
    <property type="match status" value="1"/>
</dbReference>
<dbReference type="InterPro" id="IPR011962">
    <property type="entry name" value="dCTP_deaminase"/>
</dbReference>
<dbReference type="InterPro" id="IPR036157">
    <property type="entry name" value="dUTPase-like_sf"/>
</dbReference>
<dbReference type="InterPro" id="IPR033704">
    <property type="entry name" value="dUTPase_trimeric"/>
</dbReference>
<dbReference type="NCBIfam" id="TIGR02274">
    <property type="entry name" value="dCTP_deam"/>
    <property type="match status" value="1"/>
</dbReference>
<dbReference type="PANTHER" id="PTHR42680">
    <property type="entry name" value="DCTP DEAMINASE"/>
    <property type="match status" value="1"/>
</dbReference>
<dbReference type="PANTHER" id="PTHR42680:SF3">
    <property type="entry name" value="DCTP DEAMINASE"/>
    <property type="match status" value="1"/>
</dbReference>
<dbReference type="Pfam" id="PF22769">
    <property type="entry name" value="DCD"/>
    <property type="match status" value="1"/>
</dbReference>
<dbReference type="SUPFAM" id="SSF51283">
    <property type="entry name" value="dUTPase-like"/>
    <property type="match status" value="1"/>
</dbReference>
<keyword id="KW-0378">Hydrolase</keyword>
<keyword id="KW-0546">Nucleotide metabolism</keyword>
<keyword id="KW-0547">Nucleotide-binding</keyword>
<gene>
    <name evidence="1" type="primary">dcd</name>
    <name type="ordered locus">XCV2892</name>
</gene>
<reference key="1">
    <citation type="journal article" date="2005" name="J. Bacteriol.">
        <title>Insights into genome plasticity and pathogenicity of the plant pathogenic Bacterium Xanthomonas campestris pv. vesicatoria revealed by the complete genome sequence.</title>
        <authorList>
            <person name="Thieme F."/>
            <person name="Koebnik R."/>
            <person name="Bekel T."/>
            <person name="Berger C."/>
            <person name="Boch J."/>
            <person name="Buettner D."/>
            <person name="Caldana C."/>
            <person name="Gaigalat L."/>
            <person name="Goesmann A."/>
            <person name="Kay S."/>
            <person name="Kirchner O."/>
            <person name="Lanz C."/>
            <person name="Linke B."/>
            <person name="McHardy A.C."/>
            <person name="Meyer F."/>
            <person name="Mittenhuber G."/>
            <person name="Nies D.H."/>
            <person name="Niesbach-Kloesgen U."/>
            <person name="Patschkowski T."/>
            <person name="Rueckert C."/>
            <person name="Rupp O."/>
            <person name="Schneiker S."/>
            <person name="Schuster S.C."/>
            <person name="Vorhoelter F.J."/>
            <person name="Weber E."/>
            <person name="Puehler A."/>
            <person name="Bonas U."/>
            <person name="Bartels D."/>
            <person name="Kaiser O."/>
        </authorList>
    </citation>
    <scope>NUCLEOTIDE SEQUENCE [LARGE SCALE GENOMIC DNA]</scope>
    <source>
        <strain>85-10</strain>
    </source>
</reference>
<sequence>MSIKSDRWIKRMAEQHAMIEPFEPGQVKHDAAGQRIVSFGTSSYGYDVRCSREFKVFTNINSTIVDPKHFDPGSFVDIESDVCIIPPNSFALARTVEYFRIPRDTLVVCLGKSTYARCGIIVNVTPLEPEWEGHVTLEFSNTTPLPARIYANEGVAQMLFFQSDEVCETSYKDRGGKYQGQTGVTLPRT</sequence>
<feature type="chain" id="PRO_1000009829" description="dCTP deaminase">
    <location>
        <begin position="1"/>
        <end position="189"/>
    </location>
</feature>
<feature type="active site" description="Proton donor/acceptor" evidence="1">
    <location>
        <position position="138"/>
    </location>
</feature>
<feature type="binding site" evidence="1">
    <location>
        <begin position="112"/>
        <end position="117"/>
    </location>
    <ligand>
        <name>dCTP</name>
        <dbReference type="ChEBI" id="CHEBI:61481"/>
    </ligand>
</feature>
<feature type="binding site" evidence="1">
    <location>
        <begin position="136"/>
        <end position="138"/>
    </location>
    <ligand>
        <name>dCTP</name>
        <dbReference type="ChEBI" id="CHEBI:61481"/>
    </ligand>
</feature>
<feature type="binding site" evidence="1">
    <location>
        <position position="157"/>
    </location>
    <ligand>
        <name>dCTP</name>
        <dbReference type="ChEBI" id="CHEBI:61481"/>
    </ligand>
</feature>
<feature type="binding site" evidence="1">
    <location>
        <position position="171"/>
    </location>
    <ligand>
        <name>dCTP</name>
        <dbReference type="ChEBI" id="CHEBI:61481"/>
    </ligand>
</feature>
<feature type="binding site" evidence="1">
    <location>
        <position position="181"/>
    </location>
    <ligand>
        <name>dCTP</name>
        <dbReference type="ChEBI" id="CHEBI:61481"/>
    </ligand>
</feature>
<proteinExistence type="inferred from homology"/>
<protein>
    <recommendedName>
        <fullName evidence="1">dCTP deaminase</fullName>
        <ecNumber evidence="1">3.5.4.13</ecNumber>
    </recommendedName>
    <alternativeName>
        <fullName evidence="1">Deoxycytidine triphosphate deaminase</fullName>
    </alternativeName>
</protein>
<organism>
    <name type="scientific">Xanthomonas euvesicatoria pv. vesicatoria (strain 85-10)</name>
    <name type="common">Xanthomonas campestris pv. vesicatoria</name>
    <dbReference type="NCBI Taxonomy" id="316273"/>
    <lineage>
        <taxon>Bacteria</taxon>
        <taxon>Pseudomonadati</taxon>
        <taxon>Pseudomonadota</taxon>
        <taxon>Gammaproteobacteria</taxon>
        <taxon>Lysobacterales</taxon>
        <taxon>Lysobacteraceae</taxon>
        <taxon>Xanthomonas</taxon>
    </lineage>
</organism>